<gene>
    <name type="primary">SSB1</name>
    <name type="ordered locus">CAGL0C05379g</name>
</gene>
<gene>
    <name type="primary">SSB2</name>
    <name type="ordered locus">CAGL0K04741g</name>
</gene>
<accession>Q876N3</accession>
<accession>Q6FWI6</accession>
<proteinExistence type="inferred from homology"/>
<reference key="1">
    <citation type="submission" date="2002-01" db="EMBL/GenBank/DDBJ databases">
        <authorList>
            <person name="Lachke S.A."/>
            <person name="Srikantha T."/>
            <person name="Soll D.R."/>
        </authorList>
    </citation>
    <scope>NUCLEOTIDE SEQUENCE [GENOMIC DNA]</scope>
</reference>
<reference key="2">
    <citation type="journal article" date="2004" name="Nature">
        <title>Genome evolution in yeasts.</title>
        <authorList>
            <person name="Dujon B."/>
            <person name="Sherman D."/>
            <person name="Fischer G."/>
            <person name="Durrens P."/>
            <person name="Casaregola S."/>
            <person name="Lafontaine I."/>
            <person name="de Montigny J."/>
            <person name="Marck C."/>
            <person name="Neuveglise C."/>
            <person name="Talla E."/>
            <person name="Goffard N."/>
            <person name="Frangeul L."/>
            <person name="Aigle M."/>
            <person name="Anthouard V."/>
            <person name="Babour A."/>
            <person name="Barbe V."/>
            <person name="Barnay S."/>
            <person name="Blanchin S."/>
            <person name="Beckerich J.-M."/>
            <person name="Beyne E."/>
            <person name="Bleykasten C."/>
            <person name="Boisrame A."/>
            <person name="Boyer J."/>
            <person name="Cattolico L."/>
            <person name="Confanioleri F."/>
            <person name="de Daruvar A."/>
            <person name="Despons L."/>
            <person name="Fabre E."/>
            <person name="Fairhead C."/>
            <person name="Ferry-Dumazet H."/>
            <person name="Groppi A."/>
            <person name="Hantraye F."/>
            <person name="Hennequin C."/>
            <person name="Jauniaux N."/>
            <person name="Joyet P."/>
            <person name="Kachouri R."/>
            <person name="Kerrest A."/>
            <person name="Koszul R."/>
            <person name="Lemaire M."/>
            <person name="Lesur I."/>
            <person name="Ma L."/>
            <person name="Muller H."/>
            <person name="Nicaud J.-M."/>
            <person name="Nikolski M."/>
            <person name="Oztas S."/>
            <person name="Ozier-Kalogeropoulos O."/>
            <person name="Pellenz S."/>
            <person name="Potier S."/>
            <person name="Richard G.-F."/>
            <person name="Straub M.-L."/>
            <person name="Suleau A."/>
            <person name="Swennen D."/>
            <person name="Tekaia F."/>
            <person name="Wesolowski-Louvel M."/>
            <person name="Westhof E."/>
            <person name="Wirth B."/>
            <person name="Zeniou-Meyer M."/>
            <person name="Zivanovic Y."/>
            <person name="Bolotin-Fukuhara M."/>
            <person name="Thierry A."/>
            <person name="Bouchier C."/>
            <person name="Caudron B."/>
            <person name="Scarpelli C."/>
            <person name="Gaillardin C."/>
            <person name="Weissenbach J."/>
            <person name="Wincker P."/>
            <person name="Souciet J.-L."/>
        </authorList>
    </citation>
    <scope>NUCLEOTIDE SEQUENCE [LARGE SCALE GENOMIC DNA]</scope>
    <source>
        <strain>ATCC 2001 / BCRC 20586 / JCM 3761 / NBRC 0622 / NRRL Y-65 / CBS 138</strain>
    </source>
</reference>
<dbReference type="EC" id="3.6.4.10"/>
<dbReference type="EMBL" id="AY077689">
    <property type="protein sequence ID" value="AAL86913.1"/>
    <property type="molecule type" value="Genomic_DNA"/>
</dbReference>
<dbReference type="EMBL" id="CR380949">
    <property type="protein sequence ID" value="CAG58314.1"/>
    <property type="molecule type" value="Genomic_DNA"/>
</dbReference>
<dbReference type="EMBL" id="CR380957">
    <property type="protein sequence ID" value="CAG61393.1"/>
    <property type="molecule type" value="Genomic_DNA"/>
</dbReference>
<dbReference type="RefSeq" id="XP_445408.1">
    <property type="nucleotide sequence ID" value="XM_445408.1"/>
</dbReference>
<dbReference type="RefSeq" id="XP_448432.1">
    <property type="nucleotide sequence ID" value="XM_448432.1"/>
</dbReference>
<dbReference type="SMR" id="Q876N3"/>
<dbReference type="FunCoup" id="Q876N3">
    <property type="interactions" value="2007"/>
</dbReference>
<dbReference type="STRING" id="284593.Q876N3"/>
<dbReference type="EnsemblFungi" id="CAGL0C05379g-T">
    <property type="protein sequence ID" value="CAGL0C05379g-T-p1"/>
    <property type="gene ID" value="CAGL0C05379g"/>
</dbReference>
<dbReference type="EnsemblFungi" id="CAGL0K04741g-T">
    <property type="protein sequence ID" value="CAGL0K04741g-T-p1"/>
    <property type="gene ID" value="CAGL0K04741g"/>
</dbReference>
<dbReference type="GeneID" id="2886843"/>
<dbReference type="GeneID" id="2890011"/>
<dbReference type="KEGG" id="cgr:2886843"/>
<dbReference type="KEGG" id="cgr:2890011"/>
<dbReference type="CGD" id="CAL0127488">
    <property type="gene designation" value="SSB1"/>
</dbReference>
<dbReference type="CGD" id="CAL0133897">
    <property type="gene designation" value="SSB2"/>
</dbReference>
<dbReference type="VEuPathDB" id="FungiDB:B1J91_C05379g"/>
<dbReference type="VEuPathDB" id="FungiDB:B1J91_K04741g"/>
<dbReference type="VEuPathDB" id="FungiDB:CAGL0C05379g"/>
<dbReference type="VEuPathDB" id="FungiDB:CAGL0K04741g"/>
<dbReference type="eggNOG" id="KOG0101">
    <property type="taxonomic scope" value="Eukaryota"/>
</dbReference>
<dbReference type="HOGENOM" id="CLU_005965_0_1_1"/>
<dbReference type="InParanoid" id="Q876N3"/>
<dbReference type="OMA" id="NIPPMQA"/>
<dbReference type="Proteomes" id="UP000002428">
    <property type="component" value="Chromosome C"/>
</dbReference>
<dbReference type="Proteomes" id="UP000002428">
    <property type="component" value="Chromosome K"/>
</dbReference>
<dbReference type="GO" id="GO:0005829">
    <property type="term" value="C:cytosol"/>
    <property type="evidence" value="ECO:0000314"/>
    <property type="project" value="CGD"/>
</dbReference>
<dbReference type="GO" id="GO:0062040">
    <property type="term" value="C:fungal biofilm matrix"/>
    <property type="evidence" value="ECO:0000314"/>
    <property type="project" value="CGD"/>
</dbReference>
<dbReference type="GO" id="GO:0005524">
    <property type="term" value="F:ATP binding"/>
    <property type="evidence" value="ECO:0007669"/>
    <property type="project" value="UniProtKB-KW"/>
</dbReference>
<dbReference type="GO" id="GO:0016887">
    <property type="term" value="F:ATP hydrolysis activity"/>
    <property type="evidence" value="ECO:0007669"/>
    <property type="project" value="RHEA"/>
</dbReference>
<dbReference type="GO" id="GO:0140662">
    <property type="term" value="F:ATP-dependent protein folding chaperone"/>
    <property type="evidence" value="ECO:0007669"/>
    <property type="project" value="InterPro"/>
</dbReference>
<dbReference type="GO" id="GO:0006412">
    <property type="term" value="P:translation"/>
    <property type="evidence" value="ECO:0007669"/>
    <property type="project" value="UniProtKB-KW"/>
</dbReference>
<dbReference type="CDD" id="cd24093">
    <property type="entry name" value="ASKHA_NBD_HSP70_Ssb"/>
    <property type="match status" value="1"/>
</dbReference>
<dbReference type="FunFam" id="3.90.640.10:FF:000002">
    <property type="entry name" value="Heat shock 70 kDa"/>
    <property type="match status" value="1"/>
</dbReference>
<dbReference type="FunFam" id="3.30.420.40:FF:000172">
    <property type="entry name" value="Heat shock 70 kDa protein"/>
    <property type="match status" value="1"/>
</dbReference>
<dbReference type="FunFam" id="1.20.1270.10:FF:000014">
    <property type="entry name" value="Heat shock protein 70"/>
    <property type="match status" value="1"/>
</dbReference>
<dbReference type="FunFam" id="3.30.420.40:FF:000026">
    <property type="entry name" value="Heat shock protein 70"/>
    <property type="match status" value="1"/>
</dbReference>
<dbReference type="FunFam" id="2.60.34.10:FF:000004">
    <property type="entry name" value="Heat shock protein SSB1"/>
    <property type="match status" value="1"/>
</dbReference>
<dbReference type="FunFam" id="3.30.30.30:FF:000005">
    <property type="entry name" value="Heat shock protein ssb1"/>
    <property type="match status" value="1"/>
</dbReference>
<dbReference type="Gene3D" id="1.20.1270.10">
    <property type="match status" value="1"/>
</dbReference>
<dbReference type="Gene3D" id="3.30.30.30">
    <property type="match status" value="1"/>
</dbReference>
<dbReference type="Gene3D" id="3.30.420.40">
    <property type="match status" value="2"/>
</dbReference>
<dbReference type="Gene3D" id="3.90.640.10">
    <property type="entry name" value="Actin, Chain A, domain 4"/>
    <property type="match status" value="1"/>
</dbReference>
<dbReference type="Gene3D" id="2.60.34.10">
    <property type="entry name" value="Substrate Binding Domain Of DNAk, Chain A, domain 1"/>
    <property type="match status" value="1"/>
</dbReference>
<dbReference type="InterPro" id="IPR043129">
    <property type="entry name" value="ATPase_NBD"/>
</dbReference>
<dbReference type="InterPro" id="IPR018181">
    <property type="entry name" value="Heat_shock_70_CS"/>
</dbReference>
<dbReference type="InterPro" id="IPR029048">
    <property type="entry name" value="HSP70_C_sf"/>
</dbReference>
<dbReference type="InterPro" id="IPR029047">
    <property type="entry name" value="HSP70_peptide-bd_sf"/>
</dbReference>
<dbReference type="InterPro" id="IPR013126">
    <property type="entry name" value="Hsp_70_fam"/>
</dbReference>
<dbReference type="NCBIfam" id="NF001413">
    <property type="entry name" value="PRK00290.1"/>
    <property type="match status" value="1"/>
</dbReference>
<dbReference type="PANTHER" id="PTHR19375">
    <property type="entry name" value="HEAT SHOCK PROTEIN 70KDA"/>
    <property type="match status" value="1"/>
</dbReference>
<dbReference type="Pfam" id="PF00012">
    <property type="entry name" value="HSP70"/>
    <property type="match status" value="1"/>
</dbReference>
<dbReference type="PRINTS" id="PR00301">
    <property type="entry name" value="HEATSHOCK70"/>
</dbReference>
<dbReference type="SUPFAM" id="SSF53067">
    <property type="entry name" value="Actin-like ATPase domain"/>
    <property type="match status" value="2"/>
</dbReference>
<dbReference type="SUPFAM" id="SSF100934">
    <property type="entry name" value="Heat shock protein 70kD (HSP70), C-terminal subdomain"/>
    <property type="match status" value="1"/>
</dbReference>
<dbReference type="SUPFAM" id="SSF100920">
    <property type="entry name" value="Heat shock protein 70kD (HSP70), peptide-binding domain"/>
    <property type="match status" value="1"/>
</dbReference>
<dbReference type="PROSITE" id="PS00297">
    <property type="entry name" value="HSP70_1"/>
    <property type="match status" value="1"/>
</dbReference>
<dbReference type="PROSITE" id="PS00329">
    <property type="entry name" value="HSP70_2"/>
    <property type="match status" value="1"/>
</dbReference>
<dbReference type="PROSITE" id="PS01036">
    <property type="entry name" value="HSP70_3"/>
    <property type="match status" value="1"/>
</dbReference>
<name>SSB1_CANGA</name>
<organism>
    <name type="scientific">Candida glabrata (strain ATCC 2001 / BCRC 20586 / JCM 3761 / NBRC 0622 / NRRL Y-65 / CBS 138)</name>
    <name type="common">Yeast</name>
    <name type="synonym">Nakaseomyces glabratus</name>
    <dbReference type="NCBI Taxonomy" id="284593"/>
    <lineage>
        <taxon>Eukaryota</taxon>
        <taxon>Fungi</taxon>
        <taxon>Dikarya</taxon>
        <taxon>Ascomycota</taxon>
        <taxon>Saccharomycotina</taxon>
        <taxon>Saccharomycetes</taxon>
        <taxon>Saccharomycetales</taxon>
        <taxon>Saccharomycetaceae</taxon>
        <taxon>Nakaseomyces</taxon>
    </lineage>
</organism>
<protein>
    <recommendedName>
        <fullName>Ribosome-associated molecular chaperone SSB</fullName>
        <ecNumber>3.6.4.10</ecNumber>
    </recommendedName>
    <alternativeName>
        <fullName>Heat shock protein SSB</fullName>
    </alternativeName>
    <alternativeName>
        <fullName>Hsp70 chaperone Ssb</fullName>
    </alternativeName>
</protein>
<sequence length="613" mass="66396">MADGVFQGAIGIDLGTTYSCVATYESSVEIIANEQGNRVTPSFVAFTPEERLIGDAAKNQAALNPKNTVFDAKRLIGRRFDEESVQNDMKTWPFKVVDVDGAPVIEVEYLGENKQFSPQEISSMVLTKMKEIAEAKIGKKVEKAVITVPAYFNDAQRQATKDAGAISGLNVLRIINEPTAAAIAYGLGAGKSDKERHVLIFDLGGGTFDVSLLHIAGGVYTVKSTSGNTHLGGQDFDTNLLEHFKGEFKKKTGLDISNDARALRRLRTAAERAKRTLSSVTQTTVEVDSLFEGEDFEASLTRARFEDLNAALFKSTLEPVEQVLKDAKISKSQIDEVVLVGGSTRIPKVQKLLSDYFDGKQLEKSINPDEAVAYGAAVQGAILTGQSTSDETKDLLLLDVAPLSLGVGMQGDIFGVVVPRNTTVPTIKRRTFTTVGDNQTTVQFPVYQGERVNCKENTLLGEFDLKNIPPMPAGEPVLEAIFEVDANGILKVTAVEKSTGKSANITISNAVGRLSSEDIEKMVNQAEEFKAADEAFAKRHEAKQRLESYVASIEQTVTDPVLSSKLKRGSKTKIEAALADALSALQIEDGSAEEYRKAEVGLKRVVTKAMSSR</sequence>
<feature type="chain" id="PRO_0000078367" description="Ribosome-associated molecular chaperone SSB">
    <location>
        <begin position="1"/>
        <end position="613"/>
    </location>
</feature>
<feature type="region of interest" description="Nucleotide binding domain (NBD)" evidence="1">
    <location>
        <begin position="1"/>
        <end position="391"/>
    </location>
</feature>
<feature type="region of interest" description="Inter-domain linker" evidence="1">
    <location>
        <begin position="392"/>
        <end position="402"/>
    </location>
</feature>
<feature type="region of interest" description="Substrate binding domain (SBD)" evidence="1">
    <location>
        <begin position="403"/>
        <end position="613"/>
    </location>
</feature>
<feature type="region of interest" description="Lid domain (SBDalpha)" evidence="1">
    <location>
        <begin position="516"/>
        <end position="612"/>
    </location>
</feature>
<feature type="short sequence motif" description="Nuclear export signal" evidence="2">
    <location>
        <begin position="574"/>
        <end position="582"/>
    </location>
</feature>
<feature type="binding site" evidence="1">
    <location>
        <begin position="16"/>
        <end position="18"/>
    </location>
    <ligand>
        <name>ATP</name>
        <dbReference type="ChEBI" id="CHEBI:30616"/>
    </ligand>
</feature>
<feature type="binding site" evidence="1">
    <location>
        <position position="73"/>
    </location>
    <ligand>
        <name>ATP</name>
        <dbReference type="ChEBI" id="CHEBI:30616"/>
    </ligand>
</feature>
<feature type="binding site" evidence="1">
    <location>
        <begin position="205"/>
        <end position="207"/>
    </location>
    <ligand>
        <name>ATP</name>
        <dbReference type="ChEBI" id="CHEBI:30616"/>
    </ligand>
</feature>
<feature type="binding site" evidence="1">
    <location>
        <begin position="271"/>
        <end position="278"/>
    </location>
    <ligand>
        <name>ATP</name>
        <dbReference type="ChEBI" id="CHEBI:30616"/>
    </ligand>
</feature>
<feature type="binding site" evidence="1">
    <location>
        <position position="342"/>
    </location>
    <ligand>
        <name>ATP</name>
        <dbReference type="ChEBI" id="CHEBI:30616"/>
    </ligand>
</feature>
<keyword id="KW-0067">ATP-binding</keyword>
<keyword id="KW-0143">Chaperone</keyword>
<keyword id="KW-0963">Cytoplasm</keyword>
<keyword id="KW-0378">Hydrolase</keyword>
<keyword id="KW-0547">Nucleotide-binding</keyword>
<keyword id="KW-0648">Protein biosynthesis</keyword>
<keyword id="KW-1185">Reference proteome</keyword>
<comment type="function">
    <text evidence="2">Ribosome-bound, Hsp70-type chaperone that assists in the cotranslational folding of newly synthesized proteins in the cytosol. Stimulates folding by interacting with nascent chains, binding to short, largely hydrophobic sequences exposed by unfolded proteins, thereby stabilizing longer, more slowly translated, and aggregation-prone nascent polypeptides and domains that cannot fold stably until fully synthesized. The Hsp70-protein substrate interaction depends on ATP-binding and on allosteric regulation between the NBD and the SBD. The ATP-bound state is characterized by a fast exchange rate of substrate (low affinity state), while in the ADP-bound state exchange is much slower (high affinity state). During the Hsp70 cycle, the chaperone switches between the ATP-bound state (open conformation) and the ADP-bound state (closed conformation) by major conformational rearrangements involving mainly the lid domain. Ssb cooperates with a specific Hsp40/Hsp70 co-chaperone termed the ribosome-associated complex (RAC), which stimulates the ATPase activity of the ribosome-associated pool of Ssbs and switches it to the high affinity substrate binding state. Hsp110 chaperone SSE1 and FES1 act as nucleotide exchange factors that cause substrate release.</text>
</comment>
<comment type="catalytic activity">
    <reaction evidence="2">
        <text>ATP + H2O = ADP + phosphate + H(+)</text>
        <dbReference type="Rhea" id="RHEA:13065"/>
        <dbReference type="ChEBI" id="CHEBI:15377"/>
        <dbReference type="ChEBI" id="CHEBI:15378"/>
        <dbReference type="ChEBI" id="CHEBI:30616"/>
        <dbReference type="ChEBI" id="CHEBI:43474"/>
        <dbReference type="ChEBI" id="CHEBI:456216"/>
        <dbReference type="EC" id="3.6.4.10"/>
    </reaction>
</comment>
<comment type="subunit">
    <text evidence="2">Binds to ribosomes. Binds close to the ribosomal tunnel exit via contacts with both ribosomal proteins and rRNA. Directly interacts with nascent polypeptides. This interaction is dependent on the ribosome-associated complex (RAC). Interacts with SSE1. Interacts with FES1.</text>
</comment>
<comment type="subcellular location">
    <subcellularLocation>
        <location evidence="2">Cytoplasm</location>
    </subcellularLocation>
    <text evidence="2">Associated with translating ribosomes.</text>
</comment>
<comment type="similarity">
    <text evidence="3">Belongs to the heat shock protein 70 family. Ssb-type Hsp70 subfamily.</text>
</comment>
<evidence type="ECO:0000250" key="1">
    <source>
        <dbReference type="UniProtKB" id="G0SCU5"/>
    </source>
</evidence>
<evidence type="ECO:0000250" key="2">
    <source>
        <dbReference type="UniProtKB" id="P11484"/>
    </source>
</evidence>
<evidence type="ECO:0000305" key="3"/>